<keyword id="KW-0963">Cytoplasm</keyword>
<keyword id="KW-0489">Methyltransferase</keyword>
<keyword id="KW-1185">Reference proteome</keyword>
<keyword id="KW-0698">rRNA processing</keyword>
<keyword id="KW-0949">S-adenosyl-L-methionine</keyword>
<keyword id="KW-0808">Transferase</keyword>
<evidence type="ECO:0000255" key="1">
    <source>
        <dbReference type="HAMAP-Rule" id="MF_01007"/>
    </source>
</evidence>
<comment type="function">
    <text evidence="1">Specifically methylates the N4 position of cytidine in position 1402 (C1402) of 16S rRNA.</text>
</comment>
<comment type="catalytic activity">
    <reaction evidence="1">
        <text>cytidine(1402) in 16S rRNA + S-adenosyl-L-methionine = N(4)-methylcytidine(1402) in 16S rRNA + S-adenosyl-L-homocysteine + H(+)</text>
        <dbReference type="Rhea" id="RHEA:42928"/>
        <dbReference type="Rhea" id="RHEA-COMP:10286"/>
        <dbReference type="Rhea" id="RHEA-COMP:10287"/>
        <dbReference type="ChEBI" id="CHEBI:15378"/>
        <dbReference type="ChEBI" id="CHEBI:57856"/>
        <dbReference type="ChEBI" id="CHEBI:59789"/>
        <dbReference type="ChEBI" id="CHEBI:74506"/>
        <dbReference type="ChEBI" id="CHEBI:82748"/>
        <dbReference type="EC" id="2.1.1.199"/>
    </reaction>
</comment>
<comment type="subcellular location">
    <subcellularLocation>
        <location evidence="1">Cytoplasm</location>
    </subcellularLocation>
</comment>
<comment type="similarity">
    <text evidence="1">Belongs to the methyltransferase superfamily. RsmH family.</text>
</comment>
<organism>
    <name type="scientific">Pelodictyon phaeoclathratiforme (strain DSM 5477 / BU-1)</name>
    <dbReference type="NCBI Taxonomy" id="324925"/>
    <lineage>
        <taxon>Bacteria</taxon>
        <taxon>Pseudomonadati</taxon>
        <taxon>Chlorobiota</taxon>
        <taxon>Chlorobiia</taxon>
        <taxon>Chlorobiales</taxon>
        <taxon>Chlorobiaceae</taxon>
        <taxon>Chlorobium/Pelodictyon group</taxon>
        <taxon>Pelodictyon</taxon>
    </lineage>
</organism>
<dbReference type="EC" id="2.1.1.199" evidence="1"/>
<dbReference type="EMBL" id="CP001110">
    <property type="protein sequence ID" value="ACF45044.1"/>
    <property type="molecule type" value="Genomic_DNA"/>
</dbReference>
<dbReference type="RefSeq" id="WP_012509512.1">
    <property type="nucleotide sequence ID" value="NC_011060.1"/>
</dbReference>
<dbReference type="SMR" id="B4SHF1"/>
<dbReference type="STRING" id="324925.Ppha_2901"/>
<dbReference type="KEGG" id="pph:Ppha_2901"/>
<dbReference type="eggNOG" id="COG0275">
    <property type="taxonomic scope" value="Bacteria"/>
</dbReference>
<dbReference type="HOGENOM" id="CLU_038422_3_0_10"/>
<dbReference type="OrthoDB" id="9806637at2"/>
<dbReference type="Proteomes" id="UP000002724">
    <property type="component" value="Chromosome"/>
</dbReference>
<dbReference type="GO" id="GO:0005737">
    <property type="term" value="C:cytoplasm"/>
    <property type="evidence" value="ECO:0007669"/>
    <property type="project" value="UniProtKB-SubCell"/>
</dbReference>
<dbReference type="GO" id="GO:0071424">
    <property type="term" value="F:rRNA (cytosine-N4-)-methyltransferase activity"/>
    <property type="evidence" value="ECO:0007669"/>
    <property type="project" value="UniProtKB-UniRule"/>
</dbReference>
<dbReference type="GO" id="GO:0070475">
    <property type="term" value="P:rRNA base methylation"/>
    <property type="evidence" value="ECO:0007669"/>
    <property type="project" value="UniProtKB-UniRule"/>
</dbReference>
<dbReference type="Gene3D" id="1.10.150.170">
    <property type="entry name" value="Putative methyltransferase TM0872, insert domain"/>
    <property type="match status" value="1"/>
</dbReference>
<dbReference type="Gene3D" id="3.40.50.150">
    <property type="entry name" value="Vaccinia Virus protein VP39"/>
    <property type="match status" value="1"/>
</dbReference>
<dbReference type="HAMAP" id="MF_01007">
    <property type="entry name" value="16SrRNA_methyltr_H"/>
    <property type="match status" value="1"/>
</dbReference>
<dbReference type="InterPro" id="IPR002903">
    <property type="entry name" value="RsmH"/>
</dbReference>
<dbReference type="InterPro" id="IPR023397">
    <property type="entry name" value="SAM-dep_MeTrfase_MraW_recog"/>
</dbReference>
<dbReference type="InterPro" id="IPR029063">
    <property type="entry name" value="SAM-dependent_MTases_sf"/>
</dbReference>
<dbReference type="NCBIfam" id="TIGR00006">
    <property type="entry name" value="16S rRNA (cytosine(1402)-N(4))-methyltransferase RsmH"/>
    <property type="match status" value="1"/>
</dbReference>
<dbReference type="PANTHER" id="PTHR11265:SF0">
    <property type="entry name" value="12S RRNA N4-METHYLCYTIDINE METHYLTRANSFERASE"/>
    <property type="match status" value="1"/>
</dbReference>
<dbReference type="PANTHER" id="PTHR11265">
    <property type="entry name" value="S-ADENOSYL-METHYLTRANSFERASE MRAW"/>
    <property type="match status" value="1"/>
</dbReference>
<dbReference type="Pfam" id="PF01795">
    <property type="entry name" value="Methyltransf_5"/>
    <property type="match status" value="1"/>
</dbReference>
<dbReference type="PIRSF" id="PIRSF004486">
    <property type="entry name" value="MraW"/>
    <property type="match status" value="1"/>
</dbReference>
<dbReference type="SUPFAM" id="SSF81799">
    <property type="entry name" value="Putative methyltransferase TM0872, insert domain"/>
    <property type="match status" value="1"/>
</dbReference>
<dbReference type="SUPFAM" id="SSF53335">
    <property type="entry name" value="S-adenosyl-L-methionine-dependent methyltransferases"/>
    <property type="match status" value="1"/>
</dbReference>
<reference key="1">
    <citation type="submission" date="2008-06" db="EMBL/GenBank/DDBJ databases">
        <title>Complete sequence of Pelodictyon phaeoclathratiforme BU-1.</title>
        <authorList>
            <consortium name="US DOE Joint Genome Institute"/>
            <person name="Lucas S."/>
            <person name="Copeland A."/>
            <person name="Lapidus A."/>
            <person name="Glavina del Rio T."/>
            <person name="Dalin E."/>
            <person name="Tice H."/>
            <person name="Bruce D."/>
            <person name="Goodwin L."/>
            <person name="Pitluck S."/>
            <person name="Schmutz J."/>
            <person name="Larimer F."/>
            <person name="Land M."/>
            <person name="Hauser L."/>
            <person name="Kyrpides N."/>
            <person name="Mikhailova N."/>
            <person name="Liu Z."/>
            <person name="Li T."/>
            <person name="Zhao F."/>
            <person name="Overmann J."/>
            <person name="Bryant D.A."/>
            <person name="Richardson P."/>
        </authorList>
    </citation>
    <scope>NUCLEOTIDE SEQUENCE [LARGE SCALE GENOMIC DNA]</scope>
    <source>
        <strain>DSM 5477 / BU-1</strain>
    </source>
</reference>
<protein>
    <recommendedName>
        <fullName evidence="1">Ribosomal RNA small subunit methyltransferase H</fullName>
        <ecNumber evidence="1">2.1.1.199</ecNumber>
    </recommendedName>
    <alternativeName>
        <fullName evidence="1">16S rRNA m(4)C1402 methyltransferase</fullName>
    </alternativeName>
    <alternativeName>
        <fullName evidence="1">rRNA (cytosine-N(4)-)-methyltransferase RsmH</fullName>
    </alternativeName>
</protein>
<name>RSMH_PELPB</name>
<sequence length="332" mass="36258">MVMVRDIFHEPVLVNEVVAFLVRKPGIYVDGTLGGGGHSSAMLRALFDAGFLAGSLLIGIDQDDAALRVAGETLKEFAASTVLVKGNFCDMGGLIASICAEKGLEPKVMGILLDLGVSSFQINTPDRGFSYLREGPLDMRMDSNASRSAADIVNGYDEQELARLFYRYGEEPRSRSIARAIVAYRQKHGAVTYTQELAAIIRGNAHGGEKVIKTLSRVFQALRIEVNAELDVLRQALYDGIDCLDETGRMAIISYHSLEDRIVKRVFAEKARSDWGPKGVGLREPLSWGSVAPVTRKPLIAAPDEIALNSRARSAKLRVIEKIHEGGRRASE</sequence>
<gene>
    <name evidence="1" type="primary">rsmH</name>
    <name type="synonym">mraW</name>
    <name type="ordered locus">Ppha_2901</name>
</gene>
<proteinExistence type="inferred from homology"/>
<accession>B4SHF1</accession>
<feature type="chain" id="PRO_0000387026" description="Ribosomal RNA small subunit methyltransferase H">
    <location>
        <begin position="1"/>
        <end position="332"/>
    </location>
</feature>
<feature type="binding site" evidence="1">
    <location>
        <begin position="36"/>
        <end position="38"/>
    </location>
    <ligand>
        <name>S-adenosyl-L-methionine</name>
        <dbReference type="ChEBI" id="CHEBI:59789"/>
    </ligand>
</feature>
<feature type="binding site" evidence="1">
    <location>
        <position position="61"/>
    </location>
    <ligand>
        <name>S-adenosyl-L-methionine</name>
        <dbReference type="ChEBI" id="CHEBI:59789"/>
    </ligand>
</feature>
<feature type="binding site" evidence="1">
    <location>
        <position position="88"/>
    </location>
    <ligand>
        <name>S-adenosyl-L-methionine</name>
        <dbReference type="ChEBI" id="CHEBI:59789"/>
    </ligand>
</feature>
<feature type="binding site" evidence="1">
    <location>
        <position position="114"/>
    </location>
    <ligand>
        <name>S-adenosyl-L-methionine</name>
        <dbReference type="ChEBI" id="CHEBI:59789"/>
    </ligand>
</feature>
<feature type="binding site" evidence="1">
    <location>
        <position position="121"/>
    </location>
    <ligand>
        <name>S-adenosyl-L-methionine</name>
        <dbReference type="ChEBI" id="CHEBI:59789"/>
    </ligand>
</feature>